<gene>
    <name evidence="1" type="primary">dapH</name>
    <name type="ordered locus">BLi01632</name>
    <name type="ordered locus">BL03591</name>
</gene>
<proteinExistence type="inferred from homology"/>
<evidence type="ECO:0000255" key="1">
    <source>
        <dbReference type="HAMAP-Rule" id="MF_01691"/>
    </source>
</evidence>
<dbReference type="EC" id="2.3.1.89" evidence="1"/>
<dbReference type="EMBL" id="CP000002">
    <property type="protein sequence ID" value="AAU23171.1"/>
    <property type="molecule type" value="Genomic_DNA"/>
</dbReference>
<dbReference type="EMBL" id="AE017333">
    <property type="protein sequence ID" value="AAU40529.1"/>
    <property type="molecule type" value="Genomic_DNA"/>
</dbReference>
<dbReference type="SMR" id="Q65K85"/>
<dbReference type="STRING" id="279010.BL03591"/>
<dbReference type="KEGG" id="bld:BLi01632"/>
<dbReference type="KEGG" id="bli:BL03591"/>
<dbReference type="eggNOG" id="COG2171">
    <property type="taxonomic scope" value="Bacteria"/>
</dbReference>
<dbReference type="HOGENOM" id="CLU_103751_0_0_9"/>
<dbReference type="UniPathway" id="UPA00034">
    <property type="reaction ID" value="UER00022"/>
</dbReference>
<dbReference type="Proteomes" id="UP000000606">
    <property type="component" value="Chromosome"/>
</dbReference>
<dbReference type="GO" id="GO:0047200">
    <property type="term" value="F:tetrahydrodipicolinate N-acetyltransferase activity"/>
    <property type="evidence" value="ECO:0007669"/>
    <property type="project" value="UniProtKB-EC"/>
</dbReference>
<dbReference type="GO" id="GO:0019877">
    <property type="term" value="P:diaminopimelate biosynthetic process"/>
    <property type="evidence" value="ECO:0007669"/>
    <property type="project" value="UniProtKB-UniRule"/>
</dbReference>
<dbReference type="GO" id="GO:0009089">
    <property type="term" value="P:lysine biosynthetic process via diaminopimelate"/>
    <property type="evidence" value="ECO:0007669"/>
    <property type="project" value="UniProtKB-UniRule"/>
</dbReference>
<dbReference type="CDD" id="cd03350">
    <property type="entry name" value="LbH_THP_succinylT"/>
    <property type="match status" value="1"/>
</dbReference>
<dbReference type="Gene3D" id="2.160.10.10">
    <property type="entry name" value="Hexapeptide repeat proteins"/>
    <property type="match status" value="1"/>
</dbReference>
<dbReference type="Gene3D" id="3.30.70.250">
    <property type="entry name" value="Malonyl-CoA ACP transacylase, ACP-binding"/>
    <property type="match status" value="1"/>
</dbReference>
<dbReference type="HAMAP" id="MF_01691">
    <property type="entry name" value="DapH"/>
    <property type="match status" value="1"/>
</dbReference>
<dbReference type="InterPro" id="IPR019873">
    <property type="entry name" value="DapH"/>
</dbReference>
<dbReference type="InterPro" id="IPR013710">
    <property type="entry name" value="DapH_N"/>
</dbReference>
<dbReference type="InterPro" id="IPR001451">
    <property type="entry name" value="Hexapep"/>
</dbReference>
<dbReference type="InterPro" id="IPR018357">
    <property type="entry name" value="Hexapep_transf_CS"/>
</dbReference>
<dbReference type="InterPro" id="IPR050179">
    <property type="entry name" value="Trans_hexapeptide_repeat"/>
</dbReference>
<dbReference type="InterPro" id="IPR011004">
    <property type="entry name" value="Trimer_LpxA-like_sf"/>
</dbReference>
<dbReference type="NCBIfam" id="TIGR03532">
    <property type="entry name" value="DapD_Ac"/>
    <property type="match status" value="1"/>
</dbReference>
<dbReference type="PANTHER" id="PTHR43300:SF10">
    <property type="entry name" value="2,3,4,5-TETRAHYDROPYRIDINE-2,6-DICARBOXYLATE N-ACETYLTRANSFERASE"/>
    <property type="match status" value="1"/>
</dbReference>
<dbReference type="PANTHER" id="PTHR43300">
    <property type="entry name" value="ACETYLTRANSFERASE"/>
    <property type="match status" value="1"/>
</dbReference>
<dbReference type="Pfam" id="PF08503">
    <property type="entry name" value="DapH_N"/>
    <property type="match status" value="1"/>
</dbReference>
<dbReference type="Pfam" id="PF00132">
    <property type="entry name" value="Hexapep"/>
    <property type="match status" value="1"/>
</dbReference>
<dbReference type="Pfam" id="PF14602">
    <property type="entry name" value="Hexapep_2"/>
    <property type="match status" value="1"/>
</dbReference>
<dbReference type="SUPFAM" id="SSF51161">
    <property type="entry name" value="Trimeric LpxA-like enzymes"/>
    <property type="match status" value="1"/>
</dbReference>
<dbReference type="PROSITE" id="PS00101">
    <property type="entry name" value="HEXAPEP_TRANSFERASES"/>
    <property type="match status" value="1"/>
</dbReference>
<name>DAPH_BACLD</name>
<accession>Q65K85</accession>
<accession>Q62VN7</accession>
<sequence>MKMMDANEIISFIQNSKKSTPVKVYVKGDLEGIDFGASAKPFITGNTGVVFGEWAEIQAALEANKGKIEDYVIENDRRNSAIPTLDLKNIKARIEPGAIIRDQVEIGDNAVIMMGASINIGSVIGEGTMIDMNVVLGGRATVGKNCHIGAGSVLAGVIEPPSAKPVVIEDDVVIGANAVVLEGVTVGKGAVVAAGAIVVEDVEPYTVVAGTPAKKIKDIDEKTKGKTEIKQELRQL</sequence>
<organism>
    <name type="scientific">Bacillus licheniformis (strain ATCC 14580 / DSM 13 / JCM 2505 / CCUG 7422 / NBRC 12200 / NCIMB 9375 / NCTC 10341 / NRRL NRS-1264 / Gibson 46)</name>
    <dbReference type="NCBI Taxonomy" id="279010"/>
    <lineage>
        <taxon>Bacteria</taxon>
        <taxon>Bacillati</taxon>
        <taxon>Bacillota</taxon>
        <taxon>Bacilli</taxon>
        <taxon>Bacillales</taxon>
        <taxon>Bacillaceae</taxon>
        <taxon>Bacillus</taxon>
    </lineage>
</organism>
<reference key="1">
    <citation type="journal article" date="2004" name="J. Mol. Microbiol. Biotechnol.">
        <title>The complete genome sequence of Bacillus licheniformis DSM13, an organism with great industrial potential.</title>
        <authorList>
            <person name="Veith B."/>
            <person name="Herzberg C."/>
            <person name="Steckel S."/>
            <person name="Feesche J."/>
            <person name="Maurer K.H."/>
            <person name="Ehrenreich P."/>
            <person name="Baeumer S."/>
            <person name="Henne A."/>
            <person name="Liesegang H."/>
            <person name="Merkl R."/>
            <person name="Ehrenreich A."/>
            <person name="Gottschalk G."/>
        </authorList>
    </citation>
    <scope>NUCLEOTIDE SEQUENCE [LARGE SCALE GENOMIC DNA]</scope>
    <source>
        <strain>ATCC 14580 / DSM 13 / JCM 2505 / CCUG 7422 / NBRC 12200 / NCIMB 9375 / NCTC 10341 / NRRL NRS-1264 / Gibson 46</strain>
    </source>
</reference>
<reference key="2">
    <citation type="journal article" date="2004" name="Genome Biol.">
        <title>Complete genome sequence of the industrial bacterium Bacillus licheniformis and comparisons with closely related Bacillus species.</title>
        <authorList>
            <person name="Rey M.W."/>
            <person name="Ramaiya P."/>
            <person name="Nelson B.A."/>
            <person name="Brody-Karpin S.D."/>
            <person name="Zaretsky E.J."/>
            <person name="Tang M."/>
            <person name="Lopez de Leon A."/>
            <person name="Xiang H."/>
            <person name="Gusti V."/>
            <person name="Clausen I.G."/>
            <person name="Olsen P.B."/>
            <person name="Rasmussen M.D."/>
            <person name="Andersen J.T."/>
            <person name="Joergensen P.L."/>
            <person name="Larsen T.S."/>
            <person name="Sorokin A."/>
            <person name="Bolotin A."/>
            <person name="Lapidus A."/>
            <person name="Galleron N."/>
            <person name="Ehrlich S.D."/>
            <person name="Berka R.M."/>
        </authorList>
    </citation>
    <scope>NUCLEOTIDE SEQUENCE [LARGE SCALE GENOMIC DNA]</scope>
    <source>
        <strain>ATCC 14580 / DSM 13 / JCM 2505 / CCUG 7422 / NBRC 12200 / NCIMB 9375 / NCTC 10341 / NRRL NRS-1264 / Gibson 46</strain>
    </source>
</reference>
<keyword id="KW-0012">Acyltransferase</keyword>
<keyword id="KW-0028">Amino-acid biosynthesis</keyword>
<keyword id="KW-0220">Diaminopimelate biosynthesis</keyword>
<keyword id="KW-0457">Lysine biosynthesis</keyword>
<keyword id="KW-1185">Reference proteome</keyword>
<keyword id="KW-0677">Repeat</keyword>
<keyword id="KW-0808">Transferase</keyword>
<protein>
    <recommendedName>
        <fullName evidence="1">2,3,4,5-tetrahydropyridine-2,6-dicarboxylate N-acetyltransferase</fullName>
        <ecNumber evidence="1">2.3.1.89</ecNumber>
    </recommendedName>
    <alternativeName>
        <fullName evidence="1">Tetrahydrodipicolinate N-acetyltransferase</fullName>
        <shortName evidence="1">THP acetyltransferase</shortName>
        <shortName evidence="1">Tetrahydropicolinate acetylase</shortName>
    </alternativeName>
</protein>
<comment type="function">
    <text evidence="1">Catalyzes the transfer of an acetyl group from acetyl-CoA to tetrahydrodipicolinate.</text>
</comment>
<comment type="catalytic activity">
    <reaction evidence="1">
        <text>(S)-2,3,4,5-tetrahydrodipicolinate + acetyl-CoA + H2O = L-2-acetamido-6-oxoheptanedioate + CoA</text>
        <dbReference type="Rhea" id="RHEA:13085"/>
        <dbReference type="ChEBI" id="CHEBI:15377"/>
        <dbReference type="ChEBI" id="CHEBI:16845"/>
        <dbReference type="ChEBI" id="CHEBI:57287"/>
        <dbReference type="ChEBI" id="CHEBI:57288"/>
        <dbReference type="ChEBI" id="CHEBI:58117"/>
        <dbReference type="EC" id="2.3.1.89"/>
    </reaction>
</comment>
<comment type="pathway">
    <text evidence="1">Amino-acid biosynthesis; L-lysine biosynthesis via DAP pathway; LL-2,6-diaminopimelate from (S)-tetrahydrodipicolinate (acetylase route): step 1/3.</text>
</comment>
<comment type="similarity">
    <text evidence="1">Belongs to the transferase hexapeptide repeat family. DapH subfamily.</text>
</comment>
<feature type="chain" id="PRO_0000376637" description="2,3,4,5-tetrahydropyridine-2,6-dicarboxylate N-acetyltransferase">
    <location>
        <begin position="1"/>
        <end position="236"/>
    </location>
</feature>